<keyword id="KW-0687">Ribonucleoprotein</keyword>
<keyword id="KW-0689">Ribosomal protein</keyword>
<keyword id="KW-0694">RNA-binding</keyword>
<keyword id="KW-0699">rRNA-binding</keyword>
<gene>
    <name evidence="1" type="primary">rpsE</name>
    <name type="ordered locus">amb3113</name>
</gene>
<name>RS5_PARM1</name>
<proteinExistence type="inferred from homology"/>
<reference key="1">
    <citation type="journal article" date="2005" name="DNA Res.">
        <title>Complete genome sequence of the facultative anaerobic magnetotactic bacterium Magnetospirillum sp. strain AMB-1.</title>
        <authorList>
            <person name="Matsunaga T."/>
            <person name="Okamura Y."/>
            <person name="Fukuda Y."/>
            <person name="Wahyudi A.T."/>
            <person name="Murase Y."/>
            <person name="Takeyama H."/>
        </authorList>
    </citation>
    <scope>NUCLEOTIDE SEQUENCE [LARGE SCALE GENOMIC DNA]</scope>
    <source>
        <strain>ATCC 700264 / AMB-1</strain>
    </source>
</reference>
<sequence length="210" mass="22214">MARTPSSDRPERGRGGERGDRPNRGRGGAEQTPREREESEFVDKLVHINRVAKVVKGGRRFAFAALVVVGDAKGRVGCGSGKAREVPEAIRKATEQAKRNMIKIALREGRTLHHDAYGHFGAGRVILRAAPAGTGIIAGGPMRAVFETMGVQDVVAKCLGTSNPHNMIKATFDALINLASPRHVAAKRGKKVGEIIGRRDGAAAAAAAGV</sequence>
<dbReference type="EMBL" id="AP007255">
    <property type="protein sequence ID" value="BAE51917.1"/>
    <property type="molecule type" value="Genomic_DNA"/>
</dbReference>
<dbReference type="RefSeq" id="WP_009868550.1">
    <property type="nucleotide sequence ID" value="NC_007626.1"/>
</dbReference>
<dbReference type="SMR" id="Q2W2K8"/>
<dbReference type="STRING" id="342108.amb3113"/>
<dbReference type="KEGG" id="mag:amb3113"/>
<dbReference type="HOGENOM" id="CLU_065898_2_2_5"/>
<dbReference type="OrthoDB" id="9809045at2"/>
<dbReference type="Proteomes" id="UP000007058">
    <property type="component" value="Chromosome"/>
</dbReference>
<dbReference type="GO" id="GO:0015935">
    <property type="term" value="C:small ribosomal subunit"/>
    <property type="evidence" value="ECO:0007669"/>
    <property type="project" value="InterPro"/>
</dbReference>
<dbReference type="GO" id="GO:0019843">
    <property type="term" value="F:rRNA binding"/>
    <property type="evidence" value="ECO:0007669"/>
    <property type="project" value="UniProtKB-UniRule"/>
</dbReference>
<dbReference type="GO" id="GO:0003735">
    <property type="term" value="F:structural constituent of ribosome"/>
    <property type="evidence" value="ECO:0007669"/>
    <property type="project" value="InterPro"/>
</dbReference>
<dbReference type="GO" id="GO:0006412">
    <property type="term" value="P:translation"/>
    <property type="evidence" value="ECO:0007669"/>
    <property type="project" value="UniProtKB-UniRule"/>
</dbReference>
<dbReference type="FunFam" id="3.30.160.20:FF:000001">
    <property type="entry name" value="30S ribosomal protein S5"/>
    <property type="match status" value="1"/>
</dbReference>
<dbReference type="FunFam" id="3.30.230.10:FF:000002">
    <property type="entry name" value="30S ribosomal protein S5"/>
    <property type="match status" value="1"/>
</dbReference>
<dbReference type="Gene3D" id="3.30.160.20">
    <property type="match status" value="1"/>
</dbReference>
<dbReference type="Gene3D" id="3.30.230.10">
    <property type="match status" value="1"/>
</dbReference>
<dbReference type="HAMAP" id="MF_01307_B">
    <property type="entry name" value="Ribosomal_uS5_B"/>
    <property type="match status" value="1"/>
</dbReference>
<dbReference type="InterPro" id="IPR020568">
    <property type="entry name" value="Ribosomal_Su5_D2-typ_SF"/>
</dbReference>
<dbReference type="InterPro" id="IPR000851">
    <property type="entry name" value="Ribosomal_uS5"/>
</dbReference>
<dbReference type="InterPro" id="IPR005712">
    <property type="entry name" value="Ribosomal_uS5_bac-type"/>
</dbReference>
<dbReference type="InterPro" id="IPR005324">
    <property type="entry name" value="Ribosomal_uS5_C"/>
</dbReference>
<dbReference type="InterPro" id="IPR013810">
    <property type="entry name" value="Ribosomal_uS5_N"/>
</dbReference>
<dbReference type="InterPro" id="IPR018192">
    <property type="entry name" value="Ribosomal_uS5_N_CS"/>
</dbReference>
<dbReference type="InterPro" id="IPR014721">
    <property type="entry name" value="Ribsml_uS5_D2-typ_fold_subgr"/>
</dbReference>
<dbReference type="NCBIfam" id="TIGR01021">
    <property type="entry name" value="rpsE_bact"/>
    <property type="match status" value="1"/>
</dbReference>
<dbReference type="PANTHER" id="PTHR48277">
    <property type="entry name" value="MITOCHONDRIAL RIBOSOMAL PROTEIN S5"/>
    <property type="match status" value="1"/>
</dbReference>
<dbReference type="PANTHER" id="PTHR48277:SF1">
    <property type="entry name" value="MITOCHONDRIAL RIBOSOMAL PROTEIN S5"/>
    <property type="match status" value="1"/>
</dbReference>
<dbReference type="Pfam" id="PF00333">
    <property type="entry name" value="Ribosomal_S5"/>
    <property type="match status" value="1"/>
</dbReference>
<dbReference type="Pfam" id="PF03719">
    <property type="entry name" value="Ribosomal_S5_C"/>
    <property type="match status" value="1"/>
</dbReference>
<dbReference type="SUPFAM" id="SSF54768">
    <property type="entry name" value="dsRNA-binding domain-like"/>
    <property type="match status" value="1"/>
</dbReference>
<dbReference type="SUPFAM" id="SSF54211">
    <property type="entry name" value="Ribosomal protein S5 domain 2-like"/>
    <property type="match status" value="1"/>
</dbReference>
<dbReference type="PROSITE" id="PS00585">
    <property type="entry name" value="RIBOSOMAL_S5"/>
    <property type="match status" value="1"/>
</dbReference>
<dbReference type="PROSITE" id="PS50881">
    <property type="entry name" value="S5_DSRBD"/>
    <property type="match status" value="1"/>
</dbReference>
<organism>
    <name type="scientific">Paramagnetospirillum magneticum (strain ATCC 700264 / AMB-1)</name>
    <name type="common">Magnetospirillum magneticum</name>
    <dbReference type="NCBI Taxonomy" id="342108"/>
    <lineage>
        <taxon>Bacteria</taxon>
        <taxon>Pseudomonadati</taxon>
        <taxon>Pseudomonadota</taxon>
        <taxon>Alphaproteobacteria</taxon>
        <taxon>Rhodospirillales</taxon>
        <taxon>Magnetospirillaceae</taxon>
        <taxon>Paramagnetospirillum</taxon>
    </lineage>
</organism>
<evidence type="ECO:0000255" key="1">
    <source>
        <dbReference type="HAMAP-Rule" id="MF_01307"/>
    </source>
</evidence>
<evidence type="ECO:0000256" key="2">
    <source>
        <dbReference type="SAM" id="MobiDB-lite"/>
    </source>
</evidence>
<evidence type="ECO:0000305" key="3"/>
<accession>Q2W2K8</accession>
<feature type="chain" id="PRO_1000086023" description="Small ribosomal subunit protein uS5">
    <location>
        <begin position="1"/>
        <end position="210"/>
    </location>
</feature>
<feature type="domain" description="S5 DRBM" evidence="1">
    <location>
        <begin position="41"/>
        <end position="104"/>
    </location>
</feature>
<feature type="region of interest" description="Disordered" evidence="2">
    <location>
        <begin position="1"/>
        <end position="40"/>
    </location>
</feature>
<feature type="compositionally biased region" description="Basic and acidic residues" evidence="2">
    <location>
        <begin position="1"/>
        <end position="23"/>
    </location>
</feature>
<protein>
    <recommendedName>
        <fullName evidence="1">Small ribosomal subunit protein uS5</fullName>
    </recommendedName>
    <alternativeName>
        <fullName evidence="3">30S ribosomal protein S5</fullName>
    </alternativeName>
</protein>
<comment type="function">
    <text evidence="1">With S4 and S12 plays an important role in translational accuracy.</text>
</comment>
<comment type="function">
    <text evidence="1">Located at the back of the 30S subunit body where it stabilizes the conformation of the head with respect to the body.</text>
</comment>
<comment type="subunit">
    <text evidence="1">Part of the 30S ribosomal subunit. Contacts proteins S4 and S8.</text>
</comment>
<comment type="domain">
    <text>The N-terminal domain interacts with the head of the 30S subunit; the C-terminal domain interacts with the body and contacts protein S4. The interaction surface between S4 and S5 is involved in control of translational fidelity.</text>
</comment>
<comment type="similarity">
    <text evidence="1">Belongs to the universal ribosomal protein uS5 family.</text>
</comment>